<accession>P41012</accession>
<sequence length="132" mass="14407">MKTIHVSVVTPDGPVYEDDVEMVSVKAKSGELGILPGHIRLVAPLEISAARLKKGGKTQYIAVSGGFLEVRPDKVTILAQAAERAEDIDVLRAKARKSGRTPLQSQQDDIDFKRAELALKRAMNRLSVAEMK</sequence>
<organism>
    <name type="scientific">Bacillus caldotenax</name>
    <dbReference type="NCBI Taxonomy" id="1395"/>
    <lineage>
        <taxon>Bacteria</taxon>
        <taxon>Bacillati</taxon>
        <taxon>Bacillota</taxon>
        <taxon>Bacilli</taxon>
        <taxon>Bacillales</taxon>
        <taxon>Anoxybacillaceae</taxon>
        <taxon>Geobacillus</taxon>
        <taxon>Geobacillus thermoleovorans group</taxon>
    </lineage>
</organism>
<proteinExistence type="inferred from homology"/>
<comment type="function">
    <text evidence="1">Produces ATP from ADP in the presence of a proton gradient across the membrane.</text>
</comment>
<comment type="subunit">
    <text>F-type ATPases have 2 components, CF(1) - the catalytic core - and CF(0) - the membrane proton channel. CF(1) has five subunits: alpha(3), beta(3), gamma(1), delta(1), epsilon(1). CF(0) has three main subunits: a, b and c.</text>
</comment>
<comment type="subcellular location">
    <subcellularLocation>
        <location evidence="1">Cell membrane</location>
        <topology evidence="1">Peripheral membrane protein</topology>
    </subcellularLocation>
</comment>
<comment type="similarity">
    <text evidence="2">Belongs to the ATPase epsilon chain family.</text>
</comment>
<dbReference type="EMBL" id="D38058">
    <property type="protein sequence ID" value="BAA07249.1"/>
    <property type="molecule type" value="Genomic_DNA"/>
</dbReference>
<dbReference type="BMRB" id="P41012"/>
<dbReference type="SMR" id="P41012"/>
<dbReference type="GO" id="GO:0005886">
    <property type="term" value="C:plasma membrane"/>
    <property type="evidence" value="ECO:0007669"/>
    <property type="project" value="UniProtKB-SubCell"/>
</dbReference>
<dbReference type="GO" id="GO:0045259">
    <property type="term" value="C:proton-transporting ATP synthase complex"/>
    <property type="evidence" value="ECO:0007669"/>
    <property type="project" value="UniProtKB-KW"/>
</dbReference>
<dbReference type="GO" id="GO:0005524">
    <property type="term" value="F:ATP binding"/>
    <property type="evidence" value="ECO:0007669"/>
    <property type="project" value="UniProtKB-UniRule"/>
</dbReference>
<dbReference type="GO" id="GO:0046933">
    <property type="term" value="F:proton-transporting ATP synthase activity, rotational mechanism"/>
    <property type="evidence" value="ECO:0007669"/>
    <property type="project" value="UniProtKB-UniRule"/>
</dbReference>
<dbReference type="CDD" id="cd12152">
    <property type="entry name" value="F1-ATPase_delta"/>
    <property type="match status" value="1"/>
</dbReference>
<dbReference type="FunFam" id="2.60.15.10:FF:000001">
    <property type="entry name" value="ATP synthase epsilon chain"/>
    <property type="match status" value="1"/>
</dbReference>
<dbReference type="Gene3D" id="1.20.5.440">
    <property type="entry name" value="ATP synthase delta/epsilon subunit, C-terminal domain"/>
    <property type="match status" value="1"/>
</dbReference>
<dbReference type="Gene3D" id="2.60.15.10">
    <property type="entry name" value="F0F1 ATP synthase delta/epsilon subunit, N-terminal"/>
    <property type="match status" value="1"/>
</dbReference>
<dbReference type="HAMAP" id="MF_00530">
    <property type="entry name" value="ATP_synth_epsil_bac"/>
    <property type="match status" value="1"/>
</dbReference>
<dbReference type="InterPro" id="IPR036794">
    <property type="entry name" value="ATP_F1_dsu/esu_C_sf"/>
</dbReference>
<dbReference type="InterPro" id="IPR001469">
    <property type="entry name" value="ATP_synth_F1_dsu/esu"/>
</dbReference>
<dbReference type="InterPro" id="IPR020546">
    <property type="entry name" value="ATP_synth_F1_dsu/esu_N"/>
</dbReference>
<dbReference type="InterPro" id="IPR020547">
    <property type="entry name" value="ATP_synth_F1_esu_C"/>
</dbReference>
<dbReference type="InterPro" id="IPR036771">
    <property type="entry name" value="ATPsynth_dsu/esu_N"/>
</dbReference>
<dbReference type="NCBIfam" id="TIGR01216">
    <property type="entry name" value="ATP_synt_epsi"/>
    <property type="match status" value="1"/>
</dbReference>
<dbReference type="NCBIfam" id="NF001846">
    <property type="entry name" value="PRK00571.1-3"/>
    <property type="match status" value="1"/>
</dbReference>
<dbReference type="NCBIfam" id="NF009980">
    <property type="entry name" value="PRK13446.1"/>
    <property type="match status" value="1"/>
</dbReference>
<dbReference type="PANTHER" id="PTHR13822">
    <property type="entry name" value="ATP SYNTHASE DELTA/EPSILON CHAIN"/>
    <property type="match status" value="1"/>
</dbReference>
<dbReference type="PANTHER" id="PTHR13822:SF10">
    <property type="entry name" value="ATP SYNTHASE EPSILON CHAIN, CHLOROPLASTIC"/>
    <property type="match status" value="1"/>
</dbReference>
<dbReference type="Pfam" id="PF00401">
    <property type="entry name" value="ATP-synt_DE"/>
    <property type="match status" value="1"/>
</dbReference>
<dbReference type="Pfam" id="PF02823">
    <property type="entry name" value="ATP-synt_DE_N"/>
    <property type="match status" value="1"/>
</dbReference>
<dbReference type="SUPFAM" id="SSF46604">
    <property type="entry name" value="Epsilon subunit of F1F0-ATP synthase C-terminal domain"/>
    <property type="match status" value="1"/>
</dbReference>
<dbReference type="SUPFAM" id="SSF51344">
    <property type="entry name" value="Epsilon subunit of F1F0-ATP synthase N-terminal domain"/>
    <property type="match status" value="1"/>
</dbReference>
<feature type="chain" id="PRO_0000188090" description="ATP synthase epsilon chain">
    <location>
        <begin position="1"/>
        <end position="132"/>
    </location>
</feature>
<evidence type="ECO:0000250" key="1"/>
<evidence type="ECO:0000305" key="2"/>
<keyword id="KW-0066">ATP synthesis</keyword>
<keyword id="KW-1003">Cell membrane</keyword>
<keyword id="KW-0139">CF(1)</keyword>
<keyword id="KW-0375">Hydrogen ion transport</keyword>
<keyword id="KW-0406">Ion transport</keyword>
<keyword id="KW-0472">Membrane</keyword>
<keyword id="KW-0813">Transport</keyword>
<gene>
    <name type="primary">atpC</name>
</gene>
<name>ATPE_BACCA</name>
<protein>
    <recommendedName>
        <fullName>ATP synthase epsilon chain</fullName>
    </recommendedName>
    <alternativeName>
        <fullName>ATP synthase F1 sector epsilon subunit</fullName>
    </alternativeName>
    <alternativeName>
        <fullName>F-ATPase epsilon subunit</fullName>
    </alternativeName>
</protein>
<reference key="1">
    <citation type="submission" date="1994-08" db="EMBL/GenBank/DDBJ databases">
        <authorList>
            <person name="Ishizuka M."/>
        </authorList>
    </citation>
    <scope>NUCLEOTIDE SEQUENCE [GENOMIC DNA]</scope>
</reference>